<reference key="1">
    <citation type="journal article" date="2008" name="PLoS Genet.">
        <title>Complete genome sequence of the N2-fixing broad host range endophyte Klebsiella pneumoniae 342 and virulence predictions verified in mice.</title>
        <authorList>
            <person name="Fouts D.E."/>
            <person name="Tyler H.L."/>
            <person name="DeBoy R.T."/>
            <person name="Daugherty S."/>
            <person name="Ren Q."/>
            <person name="Badger J.H."/>
            <person name="Durkin A.S."/>
            <person name="Huot H."/>
            <person name="Shrivastava S."/>
            <person name="Kothari S."/>
            <person name="Dodson R.J."/>
            <person name="Mohamoud Y."/>
            <person name="Khouri H."/>
            <person name="Roesch L.F.W."/>
            <person name="Krogfelt K.A."/>
            <person name="Struve C."/>
            <person name="Triplett E.W."/>
            <person name="Methe B.A."/>
        </authorList>
    </citation>
    <scope>NUCLEOTIDE SEQUENCE [LARGE SCALE GENOMIC DNA]</scope>
    <source>
        <strain>342</strain>
    </source>
</reference>
<dbReference type="EC" id="2.1.1.173" evidence="1"/>
<dbReference type="EC" id="2.1.1.264" evidence="1"/>
<dbReference type="EMBL" id="CP000964">
    <property type="protein sequence ID" value="ACI08993.1"/>
    <property type="molecule type" value="Genomic_DNA"/>
</dbReference>
<dbReference type="SMR" id="B5XY56"/>
<dbReference type="KEGG" id="kpe:KPK_3591"/>
<dbReference type="HOGENOM" id="CLU_014042_2_0_6"/>
<dbReference type="Proteomes" id="UP000001734">
    <property type="component" value="Chromosome"/>
</dbReference>
<dbReference type="GO" id="GO:0005737">
    <property type="term" value="C:cytoplasm"/>
    <property type="evidence" value="ECO:0007669"/>
    <property type="project" value="UniProtKB-SubCell"/>
</dbReference>
<dbReference type="GO" id="GO:0052915">
    <property type="term" value="F:23S rRNA (guanine(2445)-N(2))-methyltransferase activity"/>
    <property type="evidence" value="ECO:0007669"/>
    <property type="project" value="UniProtKB-UniRule"/>
</dbReference>
<dbReference type="GO" id="GO:0003723">
    <property type="term" value="F:RNA binding"/>
    <property type="evidence" value="ECO:0007669"/>
    <property type="project" value="UniProtKB-KW"/>
</dbReference>
<dbReference type="GO" id="GO:0070043">
    <property type="term" value="F:rRNA (guanine-N7-)-methyltransferase activity"/>
    <property type="evidence" value="ECO:0007669"/>
    <property type="project" value="UniProtKB-UniRule"/>
</dbReference>
<dbReference type="CDD" id="cd02440">
    <property type="entry name" value="AdoMet_MTases"/>
    <property type="match status" value="1"/>
</dbReference>
<dbReference type="CDD" id="cd11715">
    <property type="entry name" value="THUMP_AdoMetMT"/>
    <property type="match status" value="1"/>
</dbReference>
<dbReference type="FunFam" id="3.30.750.80:FF:000001">
    <property type="entry name" value="Ribosomal RNA large subunit methyltransferase K/L"/>
    <property type="match status" value="1"/>
</dbReference>
<dbReference type="FunFam" id="3.40.50.150:FF:000039">
    <property type="entry name" value="Ribosomal RNA large subunit methyltransferase K/L"/>
    <property type="match status" value="1"/>
</dbReference>
<dbReference type="Gene3D" id="3.30.2130.30">
    <property type="match status" value="1"/>
</dbReference>
<dbReference type="Gene3D" id="3.30.750.80">
    <property type="entry name" value="RNA methyltransferase domain (HRMD) like"/>
    <property type="match status" value="1"/>
</dbReference>
<dbReference type="Gene3D" id="3.40.50.150">
    <property type="entry name" value="Vaccinia Virus protein VP39"/>
    <property type="match status" value="2"/>
</dbReference>
<dbReference type="HAMAP" id="MF_01858">
    <property type="entry name" value="23SrRNA_methyltr_KL"/>
    <property type="match status" value="1"/>
</dbReference>
<dbReference type="InterPro" id="IPR017244">
    <property type="entry name" value="23SrRNA_methyltr_KL"/>
</dbReference>
<dbReference type="InterPro" id="IPR002052">
    <property type="entry name" value="DNA_methylase_N6_adenine_CS"/>
</dbReference>
<dbReference type="InterPro" id="IPR000241">
    <property type="entry name" value="RlmKL-like_Mtase"/>
</dbReference>
<dbReference type="InterPro" id="IPR053943">
    <property type="entry name" value="RlmKL-like_Mtase_CS"/>
</dbReference>
<dbReference type="InterPro" id="IPR054170">
    <property type="entry name" value="RlmL_1st"/>
</dbReference>
<dbReference type="InterPro" id="IPR019614">
    <property type="entry name" value="SAM-dep_methyl-trfase"/>
</dbReference>
<dbReference type="InterPro" id="IPR029063">
    <property type="entry name" value="SAM-dependent_MTases_sf"/>
</dbReference>
<dbReference type="InterPro" id="IPR004114">
    <property type="entry name" value="THUMP_dom"/>
</dbReference>
<dbReference type="NCBIfam" id="NF008748">
    <property type="entry name" value="PRK11783.1"/>
    <property type="match status" value="1"/>
</dbReference>
<dbReference type="PANTHER" id="PTHR47313">
    <property type="entry name" value="RIBOSOMAL RNA LARGE SUBUNIT METHYLTRANSFERASE K/L"/>
    <property type="match status" value="1"/>
</dbReference>
<dbReference type="PANTHER" id="PTHR47313:SF1">
    <property type="entry name" value="RIBOSOMAL RNA LARGE SUBUNIT METHYLTRANSFERASE K_L"/>
    <property type="match status" value="1"/>
</dbReference>
<dbReference type="Pfam" id="PF10672">
    <property type="entry name" value="Methyltrans_SAM"/>
    <property type="match status" value="1"/>
</dbReference>
<dbReference type="Pfam" id="PF22020">
    <property type="entry name" value="RlmL_1st"/>
    <property type="match status" value="1"/>
</dbReference>
<dbReference type="Pfam" id="PF02926">
    <property type="entry name" value="THUMP"/>
    <property type="match status" value="1"/>
</dbReference>
<dbReference type="Pfam" id="PF01170">
    <property type="entry name" value="UPF0020"/>
    <property type="match status" value="1"/>
</dbReference>
<dbReference type="PIRSF" id="PIRSF037618">
    <property type="entry name" value="RNA_Mtase_bacteria_prd"/>
    <property type="match status" value="1"/>
</dbReference>
<dbReference type="PRINTS" id="PR00507">
    <property type="entry name" value="N12N6MTFRASE"/>
</dbReference>
<dbReference type="SMART" id="SM00981">
    <property type="entry name" value="THUMP"/>
    <property type="match status" value="1"/>
</dbReference>
<dbReference type="SUPFAM" id="SSF53335">
    <property type="entry name" value="S-adenosyl-L-methionine-dependent methyltransferases"/>
    <property type="match status" value="2"/>
</dbReference>
<dbReference type="PROSITE" id="PS51165">
    <property type="entry name" value="THUMP"/>
    <property type="match status" value="1"/>
</dbReference>
<dbReference type="PROSITE" id="PS01261">
    <property type="entry name" value="UPF0020"/>
    <property type="match status" value="1"/>
</dbReference>
<name>RLMKL_KLEP3</name>
<protein>
    <recommendedName>
        <fullName evidence="1">Ribosomal RNA large subunit methyltransferase K/L</fullName>
    </recommendedName>
    <domain>
        <recommendedName>
            <fullName evidence="1">23S rRNA m2G2445 methyltransferase</fullName>
            <ecNumber evidence="1">2.1.1.173</ecNumber>
        </recommendedName>
        <alternativeName>
            <fullName evidence="1">rRNA (guanine-N(2)-)-methyltransferase RlmL</fullName>
        </alternativeName>
    </domain>
    <domain>
        <recommendedName>
            <fullName evidence="1">23S rRNA m7G2069 methyltransferase</fullName>
            <ecNumber evidence="1">2.1.1.264</ecNumber>
        </recommendedName>
        <alternativeName>
            <fullName evidence="1">rRNA (guanine-N(7)-)-methyltransferase RlmK</fullName>
        </alternativeName>
    </domain>
</protein>
<evidence type="ECO:0000255" key="1">
    <source>
        <dbReference type="HAMAP-Rule" id="MF_01858"/>
    </source>
</evidence>
<gene>
    <name evidence="1" type="primary">rlmL</name>
    <name type="ordered locus">KPK_3591</name>
</gene>
<accession>B5XY56</accession>
<sequence>MNSLFASTARGLEELLKTELEGLGATDCQVVQGGVHFQGDTRLLYQSLMWSRLASRIMLPLGECRVYSDLDLYLGVQAIPWTEMFNPGATFAVHFSGLNDEIRNSQYGALKVKDAIVDSFTRKNLPRPNVDRESPDLRINVWLNKETAHISLDLSGEGLHLRGYRDGTGMAPIKENLAAAIVMRSGWVPGTPLLDPMCGSGTLLIEAAMLATDRAPGLHRGHWGFGGWAQHDDAIWKEVKAEAQTRARQGLAAYGSRFYGSDVDERVIERARRNARRAGIGELIDFAVKDVAQLNNPLPKGPYGTVISNPPYGERLESEPALIALHSLLGRIMKSQFGGWNLSVFSASPELLSCLQLRADKQFKAKNGPLDCIQKNYHLAESEGGKPAMLAEDFANRLRKNLKKFEKWARQEGIECYRLYDADLPEYNVAIDRYGDWVVVQEYAPPKTVDAHKARQRLFDIIAATIAVLEIAPNKLVLKTRERQKGKNQYQKMAEKGDFIEVQEYNARLWVNLTDYLDTGLFLDHRIARRMLGQMSKGKDFLNLFSYTGSASVHAGLGGARSTTTVDMSRTYLEWAERNLRLNGLTGRAHRLMQADVLGWLRESTEQFDLIFIDPPTFSNSKRMEDAFDVQRDHIRLMTDLKRLLRKGGTIMFSNNKRGFRMDHDGLAALGLKAQEISQKTLSQDFARNRQIHNCWLITAA</sequence>
<organism>
    <name type="scientific">Klebsiella pneumoniae (strain 342)</name>
    <dbReference type="NCBI Taxonomy" id="507522"/>
    <lineage>
        <taxon>Bacteria</taxon>
        <taxon>Pseudomonadati</taxon>
        <taxon>Pseudomonadota</taxon>
        <taxon>Gammaproteobacteria</taxon>
        <taxon>Enterobacterales</taxon>
        <taxon>Enterobacteriaceae</taxon>
        <taxon>Klebsiella/Raoultella group</taxon>
        <taxon>Klebsiella</taxon>
        <taxon>Klebsiella pneumoniae complex</taxon>
    </lineage>
</organism>
<proteinExistence type="inferred from homology"/>
<feature type="chain" id="PRO_0000366767" description="Ribosomal RNA large subunit methyltransferase K/L">
    <location>
        <begin position="1"/>
        <end position="701"/>
    </location>
</feature>
<feature type="domain" description="THUMP" evidence="1">
    <location>
        <begin position="43"/>
        <end position="154"/>
    </location>
</feature>
<comment type="function">
    <text evidence="1">Specifically methylates the guanine in position 2445 (m2G2445) and the guanine in position 2069 (m7G2069) of 23S rRNA.</text>
</comment>
<comment type="catalytic activity">
    <reaction evidence="1">
        <text>guanosine(2445) in 23S rRNA + S-adenosyl-L-methionine = N(2)-methylguanosine(2445) in 23S rRNA + S-adenosyl-L-homocysteine + H(+)</text>
        <dbReference type="Rhea" id="RHEA:42740"/>
        <dbReference type="Rhea" id="RHEA-COMP:10215"/>
        <dbReference type="Rhea" id="RHEA-COMP:10216"/>
        <dbReference type="ChEBI" id="CHEBI:15378"/>
        <dbReference type="ChEBI" id="CHEBI:57856"/>
        <dbReference type="ChEBI" id="CHEBI:59789"/>
        <dbReference type="ChEBI" id="CHEBI:74269"/>
        <dbReference type="ChEBI" id="CHEBI:74481"/>
        <dbReference type="EC" id="2.1.1.173"/>
    </reaction>
</comment>
<comment type="catalytic activity">
    <reaction evidence="1">
        <text>guanosine(2069) in 23S rRNA + S-adenosyl-L-methionine = N(2)-methylguanosine(2069) in 23S rRNA + S-adenosyl-L-homocysteine + H(+)</text>
        <dbReference type="Rhea" id="RHEA:43772"/>
        <dbReference type="Rhea" id="RHEA-COMP:10688"/>
        <dbReference type="Rhea" id="RHEA-COMP:10689"/>
        <dbReference type="ChEBI" id="CHEBI:15378"/>
        <dbReference type="ChEBI" id="CHEBI:57856"/>
        <dbReference type="ChEBI" id="CHEBI:59789"/>
        <dbReference type="ChEBI" id="CHEBI:74269"/>
        <dbReference type="ChEBI" id="CHEBI:74481"/>
        <dbReference type="EC" id="2.1.1.264"/>
    </reaction>
</comment>
<comment type="subcellular location">
    <subcellularLocation>
        <location evidence="1">Cytoplasm</location>
    </subcellularLocation>
</comment>
<comment type="similarity">
    <text evidence="1">Belongs to the methyltransferase superfamily. RlmKL family.</text>
</comment>
<keyword id="KW-0963">Cytoplasm</keyword>
<keyword id="KW-0489">Methyltransferase</keyword>
<keyword id="KW-0694">RNA-binding</keyword>
<keyword id="KW-0698">rRNA processing</keyword>
<keyword id="KW-0949">S-adenosyl-L-methionine</keyword>
<keyword id="KW-0808">Transferase</keyword>